<organism>
    <name type="scientific">Thermoplasma volcanium (strain ATCC 51530 / DSM 4299 / JCM 9571 / NBRC 15438 / GSS1)</name>
    <dbReference type="NCBI Taxonomy" id="273116"/>
    <lineage>
        <taxon>Archaea</taxon>
        <taxon>Methanobacteriati</taxon>
        <taxon>Thermoplasmatota</taxon>
        <taxon>Thermoplasmata</taxon>
        <taxon>Thermoplasmatales</taxon>
        <taxon>Thermoplasmataceae</taxon>
        <taxon>Thermoplasma</taxon>
    </lineage>
</organism>
<comment type="function">
    <text evidence="1">One of two assembly initiator proteins, it binds directly to the 5'-end of the 23S rRNA, where it nucleates assembly of the 50S subunit.</text>
</comment>
<comment type="function">
    <text evidence="1">Located at the polypeptide exit tunnel on the outside of the subunit.</text>
</comment>
<comment type="subunit">
    <text evidence="1">Part of the 50S ribosomal subunit.</text>
</comment>
<comment type="similarity">
    <text evidence="3">Belongs to the universal ribosomal protein uL24 family.</text>
</comment>
<protein>
    <recommendedName>
        <fullName evidence="3">Large ribosomal subunit protein uL24</fullName>
    </recommendedName>
    <alternativeName>
        <fullName>50S ribosomal protein L24</fullName>
    </alternativeName>
</protein>
<dbReference type="EMBL" id="BA000011">
    <property type="protein sequence ID" value="BAB59482.1"/>
    <property type="molecule type" value="Genomic_DNA"/>
</dbReference>
<dbReference type="RefSeq" id="WP_010916594.1">
    <property type="nucleotide sequence ID" value="NC_002689.2"/>
</dbReference>
<dbReference type="SMR" id="Q97BW5"/>
<dbReference type="STRING" id="273116.gene:9381117"/>
<dbReference type="PaxDb" id="273116-14324555"/>
<dbReference type="GeneID" id="1440852"/>
<dbReference type="KEGG" id="tvo:TVG0338390"/>
<dbReference type="eggNOG" id="arCOG04094">
    <property type="taxonomic scope" value="Archaea"/>
</dbReference>
<dbReference type="HOGENOM" id="CLU_093240_1_0_2"/>
<dbReference type="OrthoDB" id="10899at2157"/>
<dbReference type="PhylomeDB" id="Q97BW5"/>
<dbReference type="Proteomes" id="UP000001017">
    <property type="component" value="Chromosome"/>
</dbReference>
<dbReference type="GO" id="GO:0015934">
    <property type="term" value="C:large ribosomal subunit"/>
    <property type="evidence" value="ECO:0007669"/>
    <property type="project" value="InterPro"/>
</dbReference>
<dbReference type="GO" id="GO:0019843">
    <property type="term" value="F:rRNA binding"/>
    <property type="evidence" value="ECO:0007669"/>
    <property type="project" value="UniProtKB-KW"/>
</dbReference>
<dbReference type="GO" id="GO:0003735">
    <property type="term" value="F:structural constituent of ribosome"/>
    <property type="evidence" value="ECO:0007669"/>
    <property type="project" value="InterPro"/>
</dbReference>
<dbReference type="GO" id="GO:0006412">
    <property type="term" value="P:translation"/>
    <property type="evidence" value="ECO:0007669"/>
    <property type="project" value="InterPro"/>
</dbReference>
<dbReference type="CDD" id="cd06089">
    <property type="entry name" value="KOW_RPL26"/>
    <property type="match status" value="1"/>
</dbReference>
<dbReference type="Gene3D" id="2.30.30.30">
    <property type="match status" value="1"/>
</dbReference>
<dbReference type="InterPro" id="IPR005824">
    <property type="entry name" value="KOW"/>
</dbReference>
<dbReference type="InterPro" id="IPR014722">
    <property type="entry name" value="Rib_uL2_dom2"/>
</dbReference>
<dbReference type="InterPro" id="IPR005825">
    <property type="entry name" value="Ribosomal_uL24_CS"/>
</dbReference>
<dbReference type="InterPro" id="IPR005756">
    <property type="entry name" value="Ribosomal_uL24_euk/arc"/>
</dbReference>
<dbReference type="InterPro" id="IPR041988">
    <property type="entry name" value="Ribosomal_uL24_KOW"/>
</dbReference>
<dbReference type="InterPro" id="IPR008991">
    <property type="entry name" value="Translation_prot_SH3-like_sf"/>
</dbReference>
<dbReference type="NCBIfam" id="TIGR01080">
    <property type="entry name" value="rplX_A_E"/>
    <property type="match status" value="1"/>
</dbReference>
<dbReference type="PANTHER" id="PTHR11143">
    <property type="entry name" value="60S RIBOSOMAL PROTEIN L26 FAMILY MEMBER"/>
    <property type="match status" value="1"/>
</dbReference>
<dbReference type="Pfam" id="PF16906">
    <property type="entry name" value="Ribosomal_L26"/>
    <property type="match status" value="1"/>
</dbReference>
<dbReference type="SMART" id="SM00739">
    <property type="entry name" value="KOW"/>
    <property type="match status" value="1"/>
</dbReference>
<dbReference type="SUPFAM" id="SSF50104">
    <property type="entry name" value="Translation proteins SH3-like domain"/>
    <property type="match status" value="1"/>
</dbReference>
<dbReference type="PROSITE" id="PS01108">
    <property type="entry name" value="RIBOSOMAL_L24"/>
    <property type="match status" value="1"/>
</dbReference>
<proteinExistence type="inferred from homology"/>
<gene>
    <name type="primary">rpl24</name>
    <name type="ordered locus">TV0340</name>
    <name type="ORF">TVG0338390</name>
</gene>
<keyword id="KW-0687">Ribonucleoprotein</keyword>
<keyword id="KW-0689">Ribosomal protein</keyword>
<keyword id="KW-0694">RNA-binding</keyword>
<keyword id="KW-0699">rRNA-binding</keyword>
<accession>Q97BW5</accession>
<reference key="1">
    <citation type="journal article" date="2000" name="Proc. Natl. Acad. Sci. U.S.A.">
        <title>Archaeal adaptation to higher temperatures revealed by genomic sequence of Thermoplasma volcanium.</title>
        <authorList>
            <person name="Kawashima T."/>
            <person name="Amano N."/>
            <person name="Koike H."/>
            <person name="Makino S."/>
            <person name="Higuchi S."/>
            <person name="Kawashima-Ohya Y."/>
            <person name="Watanabe K."/>
            <person name="Yamazaki M."/>
            <person name="Kanehori K."/>
            <person name="Kawamoto T."/>
            <person name="Nunoshiba T."/>
            <person name="Yamamoto Y."/>
            <person name="Aramaki H."/>
            <person name="Makino K."/>
            <person name="Suzuki M."/>
        </authorList>
    </citation>
    <scope>NUCLEOTIDE SEQUENCE [LARGE SCALE GENOMIC DNA]</scope>
    <source>
        <strain>ATCC 51530 / DSM 4299 / JCM 9571 / NBRC 15438 / GSS1</strain>
    </source>
</reference>
<evidence type="ECO:0000250" key="1"/>
<evidence type="ECO:0000256" key="2">
    <source>
        <dbReference type="SAM" id="MobiDB-lite"/>
    </source>
</evidence>
<evidence type="ECO:0000305" key="3"/>
<sequence>MYDKLNVALSKDLRKKYGIRSFPIVKGDVVKVVSGARKGEGGKVAEVDHHSGLVIVEGITIAKIDGKQKGFGISPEKLQITHLDLSRSERFQKIKELANIKHITIQEEPIQEEQQKTEETKQEIAPEEVEAKEAQDKQEVKENDQ</sequence>
<feature type="chain" id="PRO_0000130785" description="Large ribosomal subunit protein uL24">
    <location>
        <begin position="1"/>
        <end position="145"/>
    </location>
</feature>
<feature type="region of interest" description="Disordered" evidence="2">
    <location>
        <begin position="108"/>
        <end position="145"/>
    </location>
</feature>
<feature type="compositionally biased region" description="Basic and acidic residues" evidence="2">
    <location>
        <begin position="113"/>
        <end position="145"/>
    </location>
</feature>
<name>RL24_THEVO</name>